<protein>
    <recommendedName>
        <fullName evidence="1">Large ribosomal subunit protein uL1</fullName>
    </recommendedName>
    <alternativeName>
        <fullName evidence="2">50S ribosomal protein L1</fullName>
    </alternativeName>
</protein>
<proteinExistence type="inferred from homology"/>
<dbReference type="EMBL" id="CP000803">
    <property type="protein sequence ID" value="ABU62326.2"/>
    <property type="status" value="ALT_INIT"/>
    <property type="molecule type" value="Genomic_DNA"/>
</dbReference>
<dbReference type="RefSeq" id="WP_003028678.1">
    <property type="nucleotide sequence ID" value="NC_009749.1"/>
</dbReference>
<dbReference type="SMR" id="A7NEC3"/>
<dbReference type="GeneID" id="75264697"/>
<dbReference type="KEGG" id="fta:FTA_1851"/>
<dbReference type="HOGENOM" id="CLU_062853_0_0_6"/>
<dbReference type="GO" id="GO:0022625">
    <property type="term" value="C:cytosolic large ribosomal subunit"/>
    <property type="evidence" value="ECO:0007669"/>
    <property type="project" value="TreeGrafter"/>
</dbReference>
<dbReference type="GO" id="GO:0019843">
    <property type="term" value="F:rRNA binding"/>
    <property type="evidence" value="ECO:0007669"/>
    <property type="project" value="UniProtKB-UniRule"/>
</dbReference>
<dbReference type="GO" id="GO:0003735">
    <property type="term" value="F:structural constituent of ribosome"/>
    <property type="evidence" value="ECO:0007669"/>
    <property type="project" value="InterPro"/>
</dbReference>
<dbReference type="GO" id="GO:0000049">
    <property type="term" value="F:tRNA binding"/>
    <property type="evidence" value="ECO:0007669"/>
    <property type="project" value="UniProtKB-KW"/>
</dbReference>
<dbReference type="GO" id="GO:0006417">
    <property type="term" value="P:regulation of translation"/>
    <property type="evidence" value="ECO:0007669"/>
    <property type="project" value="UniProtKB-KW"/>
</dbReference>
<dbReference type="GO" id="GO:0006412">
    <property type="term" value="P:translation"/>
    <property type="evidence" value="ECO:0007669"/>
    <property type="project" value="UniProtKB-UniRule"/>
</dbReference>
<dbReference type="CDD" id="cd00403">
    <property type="entry name" value="Ribosomal_L1"/>
    <property type="match status" value="1"/>
</dbReference>
<dbReference type="FunFam" id="3.40.50.790:FF:000001">
    <property type="entry name" value="50S ribosomal protein L1"/>
    <property type="match status" value="1"/>
</dbReference>
<dbReference type="Gene3D" id="3.30.190.20">
    <property type="match status" value="1"/>
</dbReference>
<dbReference type="Gene3D" id="3.40.50.790">
    <property type="match status" value="1"/>
</dbReference>
<dbReference type="HAMAP" id="MF_01318_B">
    <property type="entry name" value="Ribosomal_uL1_B"/>
    <property type="match status" value="1"/>
</dbReference>
<dbReference type="InterPro" id="IPR005878">
    <property type="entry name" value="Ribosom_uL1_bac-type"/>
</dbReference>
<dbReference type="InterPro" id="IPR002143">
    <property type="entry name" value="Ribosomal_uL1"/>
</dbReference>
<dbReference type="InterPro" id="IPR023674">
    <property type="entry name" value="Ribosomal_uL1-like"/>
</dbReference>
<dbReference type="InterPro" id="IPR028364">
    <property type="entry name" value="Ribosomal_uL1/biogenesis"/>
</dbReference>
<dbReference type="InterPro" id="IPR016095">
    <property type="entry name" value="Ribosomal_uL1_3-a/b-sand"/>
</dbReference>
<dbReference type="InterPro" id="IPR023673">
    <property type="entry name" value="Ribosomal_uL1_CS"/>
</dbReference>
<dbReference type="NCBIfam" id="TIGR01169">
    <property type="entry name" value="rplA_bact"/>
    <property type="match status" value="1"/>
</dbReference>
<dbReference type="PANTHER" id="PTHR36427">
    <property type="entry name" value="54S RIBOSOMAL PROTEIN L1, MITOCHONDRIAL"/>
    <property type="match status" value="1"/>
</dbReference>
<dbReference type="PANTHER" id="PTHR36427:SF3">
    <property type="entry name" value="LARGE RIBOSOMAL SUBUNIT PROTEIN UL1M"/>
    <property type="match status" value="1"/>
</dbReference>
<dbReference type="Pfam" id="PF00687">
    <property type="entry name" value="Ribosomal_L1"/>
    <property type="match status" value="1"/>
</dbReference>
<dbReference type="PIRSF" id="PIRSF002155">
    <property type="entry name" value="Ribosomal_L1"/>
    <property type="match status" value="1"/>
</dbReference>
<dbReference type="SUPFAM" id="SSF56808">
    <property type="entry name" value="Ribosomal protein L1"/>
    <property type="match status" value="1"/>
</dbReference>
<dbReference type="PROSITE" id="PS01199">
    <property type="entry name" value="RIBOSOMAL_L1"/>
    <property type="match status" value="1"/>
</dbReference>
<name>RL1_FRATF</name>
<evidence type="ECO:0000255" key="1">
    <source>
        <dbReference type="HAMAP-Rule" id="MF_01318"/>
    </source>
</evidence>
<evidence type="ECO:0000305" key="2"/>
<sequence length="231" mass="24496">MAKVSKRMKEISAKINAEKKYPVSEAFDLLREVSSVKFVESVDVSVALGVDPRKSDQVVRGASVLPNGTGKTVRVAVFAKGPAADAAKEAGAEVVGMEDLADEVKKGNMDFDVVIASPDSMRVVGQLGQILGPKGLMPNPKVGTVTMDVAKAVRDAKAGQVRYRVDKAGIIHTTIGKVNFTSDALKQNLEQLLTDLKKAKPAVSKGIYLKKVSVSSTMGPGINVDFSDLNI</sequence>
<comment type="function">
    <text evidence="1">Binds directly to 23S rRNA. The L1 stalk is quite mobile in the ribosome, and is involved in E site tRNA release.</text>
</comment>
<comment type="function">
    <text evidence="1">Protein L1 is also a translational repressor protein, it controls the translation of the L11 operon by binding to its mRNA.</text>
</comment>
<comment type="subunit">
    <text evidence="1">Part of the 50S ribosomal subunit.</text>
</comment>
<comment type="similarity">
    <text evidence="1">Belongs to the universal ribosomal protein uL1 family.</text>
</comment>
<comment type="sequence caution" evidence="2">
    <conflict type="erroneous initiation">
        <sequence resource="EMBL-CDS" id="ABU62326"/>
    </conflict>
</comment>
<keyword id="KW-0678">Repressor</keyword>
<keyword id="KW-0687">Ribonucleoprotein</keyword>
<keyword id="KW-0689">Ribosomal protein</keyword>
<keyword id="KW-0694">RNA-binding</keyword>
<keyword id="KW-0699">rRNA-binding</keyword>
<keyword id="KW-0810">Translation regulation</keyword>
<keyword id="KW-0820">tRNA-binding</keyword>
<gene>
    <name evidence="1" type="primary">rplA</name>
    <name type="ordered locus">FTA_1851</name>
</gene>
<organism>
    <name type="scientific">Francisella tularensis subsp. holarctica (strain FTNF002-00 / FTA)</name>
    <dbReference type="NCBI Taxonomy" id="458234"/>
    <lineage>
        <taxon>Bacteria</taxon>
        <taxon>Pseudomonadati</taxon>
        <taxon>Pseudomonadota</taxon>
        <taxon>Gammaproteobacteria</taxon>
        <taxon>Thiotrichales</taxon>
        <taxon>Francisellaceae</taxon>
        <taxon>Francisella</taxon>
    </lineage>
</organism>
<feature type="chain" id="PRO_1000051907" description="Large ribosomal subunit protein uL1">
    <location>
        <begin position="1"/>
        <end position="231"/>
    </location>
</feature>
<accession>A7NEC3</accession>
<reference key="1">
    <citation type="journal article" date="2009" name="PLoS ONE">
        <title>Complete genome sequence of Francisella tularensis subspecies holarctica FTNF002-00.</title>
        <authorList>
            <person name="Barabote R.D."/>
            <person name="Xie G."/>
            <person name="Brettin T.S."/>
            <person name="Hinrichs S.H."/>
            <person name="Fey P.D."/>
            <person name="Jay J.J."/>
            <person name="Engle J.L."/>
            <person name="Godbole S.D."/>
            <person name="Noronha J.M."/>
            <person name="Scheuermann R.H."/>
            <person name="Zhou L.W."/>
            <person name="Lion C."/>
            <person name="Dempsey M.P."/>
        </authorList>
    </citation>
    <scope>NUCLEOTIDE SEQUENCE [LARGE SCALE GENOMIC DNA]</scope>
    <source>
        <strain>FTNF002-00 / FTA</strain>
    </source>
</reference>